<keyword id="KW-0878">Amphibian defense peptide</keyword>
<keyword id="KW-0044">Antibiotic</keyword>
<keyword id="KW-0929">Antimicrobial</keyword>
<keyword id="KW-0903">Direct protein sequencing</keyword>
<keyword id="KW-0964">Secreted</keyword>
<sequence>GLVASIGRALGGLLADVVKSKEQPA</sequence>
<proteinExistence type="evidence at protein level"/>
<reference key="1">
    <citation type="journal article" date="1993" name="J. Chem. Res.">
        <title>Peptides from Australian frogs. The structures of the caerins and caeridins from Litoria gilleni.</title>
        <authorList>
            <person name="Waugh R.J."/>
            <person name="Stone D.J.M."/>
            <person name="Bowie J.H."/>
            <person name="Wallace J.C."/>
            <person name="Tyler M.J."/>
        </authorList>
    </citation>
    <scope>PROTEIN SEQUENCE</scope>
    <scope>MASS SPECTROMETRY</scope>
    <source>
        <tissue>Parotoid gland</tissue>
    </source>
</reference>
<evidence type="ECO:0000269" key="1">
    <source ref="1"/>
</evidence>
<evidence type="ECO:0000305" key="2"/>
<comment type="function">
    <text>Antibacterial peptide, that adopts an alpha helical conformation which can disrupt bacterial membranes. Each caerin displays a different antimicrobial specificity.</text>
</comment>
<comment type="subcellular location">
    <subcellularLocation>
        <location>Secreted</location>
    </subcellularLocation>
</comment>
<comment type="tissue specificity">
    <text>Expressed by the skin parotoid and/or rostral glands.</text>
</comment>
<comment type="mass spectrometry"/>
<comment type="similarity">
    <text evidence="2">Belongs to the frog skin active peptide (FSAP) family. Caerin subfamily.</text>
</comment>
<organism>
    <name type="scientific">Ranoidea gilleni</name>
    <name type="common">Centralian tree frog</name>
    <name type="synonym">Litoria gilleni</name>
    <dbReference type="NCBI Taxonomy" id="39405"/>
    <lineage>
        <taxon>Eukaryota</taxon>
        <taxon>Metazoa</taxon>
        <taxon>Chordata</taxon>
        <taxon>Craniata</taxon>
        <taxon>Vertebrata</taxon>
        <taxon>Euteleostomi</taxon>
        <taxon>Amphibia</taxon>
        <taxon>Batrachia</taxon>
        <taxon>Anura</taxon>
        <taxon>Neobatrachia</taxon>
        <taxon>Hyloidea</taxon>
        <taxon>Hylidae</taxon>
        <taxon>Pelodryadinae</taxon>
        <taxon>Ranoidea</taxon>
    </lineage>
</organism>
<name>CR25_RANGI</name>
<accession>P56237</accession>
<feature type="peptide" id="PRO_0000043746" description="Caerin-2.5">
    <location>
        <begin position="1"/>
        <end position="25"/>
    </location>
</feature>
<dbReference type="GO" id="GO:0005576">
    <property type="term" value="C:extracellular region"/>
    <property type="evidence" value="ECO:0007669"/>
    <property type="project" value="UniProtKB-SubCell"/>
</dbReference>
<dbReference type="GO" id="GO:0042742">
    <property type="term" value="P:defense response to bacterium"/>
    <property type="evidence" value="ECO:0007669"/>
    <property type="project" value="UniProtKB-KW"/>
</dbReference>
<dbReference type="InterPro" id="IPR032021">
    <property type="entry name" value="Frog_Litoria"/>
</dbReference>
<dbReference type="Pfam" id="PF16049">
    <property type="entry name" value="Antimicrobial24"/>
    <property type="match status" value="1"/>
</dbReference>
<protein>
    <recommendedName>
        <fullName>Caerin-2.5</fullName>
    </recommendedName>
</protein>